<comment type="function">
    <text evidence="1">Catalyzes the biosynthesis of agmatine from arginine.</text>
</comment>
<comment type="catalytic activity">
    <reaction evidence="1">
        <text>L-arginine + H(+) = agmatine + CO2</text>
        <dbReference type="Rhea" id="RHEA:17641"/>
        <dbReference type="ChEBI" id="CHEBI:15378"/>
        <dbReference type="ChEBI" id="CHEBI:16526"/>
        <dbReference type="ChEBI" id="CHEBI:32682"/>
        <dbReference type="ChEBI" id="CHEBI:58145"/>
        <dbReference type="EC" id="4.1.1.19"/>
    </reaction>
</comment>
<comment type="cofactor">
    <cofactor evidence="1">
        <name>Mg(2+)</name>
        <dbReference type="ChEBI" id="CHEBI:18420"/>
    </cofactor>
</comment>
<comment type="cofactor">
    <cofactor evidence="1">
        <name>pyridoxal 5'-phosphate</name>
        <dbReference type="ChEBI" id="CHEBI:597326"/>
    </cofactor>
</comment>
<comment type="pathway">
    <text evidence="1">Amine and polyamine biosynthesis; agmatine biosynthesis; agmatine from L-arginine: step 1/1.</text>
</comment>
<comment type="similarity">
    <text evidence="1">Belongs to the Orn/Lys/Arg decarboxylase class-II family. SpeA subfamily.</text>
</comment>
<dbReference type="EC" id="4.1.1.19" evidence="1"/>
<dbReference type="EMBL" id="CP000554">
    <property type="protein sequence ID" value="ABM79561.1"/>
    <property type="molecule type" value="Genomic_DNA"/>
</dbReference>
<dbReference type="RefSeq" id="WP_011827403.1">
    <property type="nucleotide sequence ID" value="NC_008820.1"/>
</dbReference>
<dbReference type="SMR" id="A2CDK1"/>
<dbReference type="STRING" id="59922.P9303_28311"/>
<dbReference type="KEGG" id="pmf:P9303_28311"/>
<dbReference type="HOGENOM" id="CLU_027243_1_0_3"/>
<dbReference type="BioCyc" id="PMAR59922:G1G80-2486-MONOMER"/>
<dbReference type="UniPathway" id="UPA00186">
    <property type="reaction ID" value="UER00284"/>
</dbReference>
<dbReference type="Proteomes" id="UP000002274">
    <property type="component" value="Chromosome"/>
</dbReference>
<dbReference type="GO" id="GO:0008792">
    <property type="term" value="F:arginine decarboxylase activity"/>
    <property type="evidence" value="ECO:0007669"/>
    <property type="project" value="UniProtKB-UniRule"/>
</dbReference>
<dbReference type="GO" id="GO:0046872">
    <property type="term" value="F:metal ion binding"/>
    <property type="evidence" value="ECO:0007669"/>
    <property type="project" value="UniProtKB-KW"/>
</dbReference>
<dbReference type="GO" id="GO:0006527">
    <property type="term" value="P:arginine catabolic process"/>
    <property type="evidence" value="ECO:0007669"/>
    <property type="project" value="InterPro"/>
</dbReference>
<dbReference type="GO" id="GO:0008295">
    <property type="term" value="P:spermidine biosynthetic process"/>
    <property type="evidence" value="ECO:0007669"/>
    <property type="project" value="UniProtKB-UniRule"/>
</dbReference>
<dbReference type="CDD" id="cd06830">
    <property type="entry name" value="PLPDE_III_ADC"/>
    <property type="match status" value="1"/>
</dbReference>
<dbReference type="Gene3D" id="1.20.58.930">
    <property type="match status" value="1"/>
</dbReference>
<dbReference type="Gene3D" id="3.20.20.10">
    <property type="entry name" value="Alanine racemase"/>
    <property type="match status" value="1"/>
</dbReference>
<dbReference type="Gene3D" id="2.40.37.10">
    <property type="entry name" value="Lyase, Ornithine Decarboxylase, Chain A, domain 1"/>
    <property type="match status" value="1"/>
</dbReference>
<dbReference type="HAMAP" id="MF_01417">
    <property type="entry name" value="SpeA"/>
    <property type="match status" value="1"/>
</dbReference>
<dbReference type="InterPro" id="IPR009006">
    <property type="entry name" value="Ala_racemase/Decarboxylase_C"/>
</dbReference>
<dbReference type="InterPro" id="IPR040634">
    <property type="entry name" value="Arg_decarb_HB"/>
</dbReference>
<dbReference type="InterPro" id="IPR041128">
    <property type="entry name" value="Arg_decarbox_C"/>
</dbReference>
<dbReference type="InterPro" id="IPR002985">
    <property type="entry name" value="Arg_decrbxlase"/>
</dbReference>
<dbReference type="InterPro" id="IPR022657">
    <property type="entry name" value="De-COase2_CS"/>
</dbReference>
<dbReference type="InterPro" id="IPR022644">
    <property type="entry name" value="De-COase2_N"/>
</dbReference>
<dbReference type="InterPro" id="IPR022653">
    <property type="entry name" value="De-COase2_pyr-phos_BS"/>
</dbReference>
<dbReference type="InterPro" id="IPR000183">
    <property type="entry name" value="Orn/DAP/Arg_de-COase"/>
</dbReference>
<dbReference type="InterPro" id="IPR029066">
    <property type="entry name" value="PLP-binding_barrel"/>
</dbReference>
<dbReference type="NCBIfam" id="NF003763">
    <property type="entry name" value="PRK05354.1"/>
    <property type="match status" value="1"/>
</dbReference>
<dbReference type="NCBIfam" id="TIGR01273">
    <property type="entry name" value="speA"/>
    <property type="match status" value="1"/>
</dbReference>
<dbReference type="PANTHER" id="PTHR43295">
    <property type="entry name" value="ARGININE DECARBOXYLASE"/>
    <property type="match status" value="1"/>
</dbReference>
<dbReference type="PANTHER" id="PTHR43295:SF9">
    <property type="entry name" value="BIOSYNTHETIC ARGININE DECARBOXYLASE"/>
    <property type="match status" value="1"/>
</dbReference>
<dbReference type="Pfam" id="PF17810">
    <property type="entry name" value="Arg_decarb_HB"/>
    <property type="match status" value="1"/>
</dbReference>
<dbReference type="Pfam" id="PF17944">
    <property type="entry name" value="Arg_decarbox_C"/>
    <property type="match status" value="1"/>
</dbReference>
<dbReference type="Pfam" id="PF02784">
    <property type="entry name" value="Orn_Arg_deC_N"/>
    <property type="match status" value="1"/>
</dbReference>
<dbReference type="PIRSF" id="PIRSF001336">
    <property type="entry name" value="Arg_decrbxlase"/>
    <property type="match status" value="1"/>
</dbReference>
<dbReference type="PRINTS" id="PR01180">
    <property type="entry name" value="ARGDCRBXLASE"/>
</dbReference>
<dbReference type="PRINTS" id="PR01179">
    <property type="entry name" value="ODADCRBXLASE"/>
</dbReference>
<dbReference type="SUPFAM" id="SSF50621">
    <property type="entry name" value="Alanine racemase C-terminal domain-like"/>
    <property type="match status" value="1"/>
</dbReference>
<dbReference type="SUPFAM" id="SSF51419">
    <property type="entry name" value="PLP-binding barrel"/>
    <property type="match status" value="1"/>
</dbReference>
<dbReference type="PROSITE" id="PS00878">
    <property type="entry name" value="ODR_DC_2_1"/>
    <property type="match status" value="1"/>
</dbReference>
<dbReference type="PROSITE" id="PS00879">
    <property type="entry name" value="ODR_DC_2_2"/>
    <property type="match status" value="1"/>
</dbReference>
<accession>A2CDK1</accession>
<feature type="chain" id="PRO_1000024259" description="Biosynthetic arginine decarboxylase">
    <location>
        <begin position="1"/>
        <end position="648"/>
    </location>
</feature>
<feature type="binding site" evidence="1">
    <location>
        <begin position="291"/>
        <end position="301"/>
    </location>
    <ligand>
        <name>substrate</name>
    </ligand>
</feature>
<feature type="modified residue" description="N6-(pyridoxal phosphate)lysine" evidence="1">
    <location>
        <position position="109"/>
    </location>
</feature>
<organism>
    <name type="scientific">Prochlorococcus marinus (strain MIT 9303)</name>
    <dbReference type="NCBI Taxonomy" id="59922"/>
    <lineage>
        <taxon>Bacteria</taxon>
        <taxon>Bacillati</taxon>
        <taxon>Cyanobacteriota</taxon>
        <taxon>Cyanophyceae</taxon>
        <taxon>Synechococcales</taxon>
        <taxon>Prochlorococcaceae</taxon>
        <taxon>Prochlorococcus</taxon>
    </lineage>
</organism>
<protein>
    <recommendedName>
        <fullName evidence="1">Biosynthetic arginine decarboxylase</fullName>
        <shortName evidence="1">ADC</shortName>
        <ecNumber evidence="1">4.1.1.19</ecNumber>
    </recommendedName>
</protein>
<gene>
    <name evidence="1" type="primary">speA</name>
    <name type="ordered locus">P9303_28311</name>
</gene>
<reference key="1">
    <citation type="journal article" date="2007" name="PLoS Genet.">
        <title>Patterns and implications of gene gain and loss in the evolution of Prochlorococcus.</title>
        <authorList>
            <person name="Kettler G.C."/>
            <person name="Martiny A.C."/>
            <person name="Huang K."/>
            <person name="Zucker J."/>
            <person name="Coleman M.L."/>
            <person name="Rodrigue S."/>
            <person name="Chen F."/>
            <person name="Lapidus A."/>
            <person name="Ferriera S."/>
            <person name="Johnson J."/>
            <person name="Steglich C."/>
            <person name="Church G.M."/>
            <person name="Richardson P."/>
            <person name="Chisholm S.W."/>
        </authorList>
    </citation>
    <scope>NUCLEOTIDE SEQUENCE [LARGE SCALE GENOMIC DNA]</scope>
    <source>
        <strain>MIT 9303</strain>
    </source>
</reference>
<evidence type="ECO:0000255" key="1">
    <source>
        <dbReference type="HAMAP-Rule" id="MF_01417"/>
    </source>
</evidence>
<name>SPEA_PROM3</name>
<sequence length="648" mass="71351">MSAADPSQGNKSWTVADSAALYGLDRWGEPYFTANANGHVQVKPRGDQGSCLDLVELVEELKSRNLNLPLLIRFDDILEDRLEKLHSAFEQAISKYGYAGRYQGVFPVKCNQQRHVVEQLVESGRHWHFGLEAGSKAELLIALSLVNDPEALLICNGYKDQRYIETAILARRLGRQPVVVIEQPDEVERIIRSSQELGAAPFIGVRAKLTTRSTGHWSSSVGEKAKFGLSFPDLLSTVEALRQADLLSDLRLLHFHIGSQINDIAVLKDAIQEAGQIYVELTKLGAPMGYLDVGGGLGVDYDGSRSASAASTNYSLQNYANDVVATVRECCKPHGITLPILVSESGRAIASHFSILVFDVLGTGTVPGAVPNQTGEEPLTIHNLRETLAGVMATQKGAASEISRLQEAWNDAVKFKDDALAAFRLGYISLTERALAEQLTWACAEAIMGQLPCHETIPDDLQGLRAVLAGTYYANLSIFRSAPDTWAIEQLFPLMPIHRLKEEPTQLGHFADLTCDSDGKLDRFIGNGQTKTLLELHNLRQNEAYMIGMFLAGAYQEVMGNLHNLFGSTNAVHIRMTTGGGYQIDHVVRGNTNSEVLEAMEHNPEILLERLRLASELAIQRGELKINDVRRLMDHLETSLRQTTYLQG</sequence>
<proteinExistence type="inferred from homology"/>
<keyword id="KW-0210">Decarboxylase</keyword>
<keyword id="KW-0456">Lyase</keyword>
<keyword id="KW-0460">Magnesium</keyword>
<keyword id="KW-0479">Metal-binding</keyword>
<keyword id="KW-0620">Polyamine biosynthesis</keyword>
<keyword id="KW-0663">Pyridoxal phosphate</keyword>
<keyword id="KW-0745">Spermidine biosynthesis</keyword>